<keyword id="KW-0963">Cytoplasm</keyword>
<keyword id="KW-0342">GTP-binding</keyword>
<keyword id="KW-0396">Initiation factor</keyword>
<keyword id="KW-0547">Nucleotide-binding</keyword>
<keyword id="KW-0648">Protein biosynthesis</keyword>
<dbReference type="EMBL" id="AM286415">
    <property type="protein sequence ID" value="CAL10560.1"/>
    <property type="molecule type" value="Genomic_DNA"/>
</dbReference>
<dbReference type="RefSeq" id="WP_005175395.1">
    <property type="nucleotide sequence ID" value="NC_008800.1"/>
</dbReference>
<dbReference type="RefSeq" id="YP_001004804.1">
    <property type="nucleotide sequence ID" value="NC_008800.1"/>
</dbReference>
<dbReference type="SMR" id="A1JIW9"/>
<dbReference type="KEGG" id="yen:YE0434"/>
<dbReference type="PATRIC" id="fig|393305.7.peg.530"/>
<dbReference type="eggNOG" id="COG0532">
    <property type="taxonomic scope" value="Bacteria"/>
</dbReference>
<dbReference type="HOGENOM" id="CLU_006301_6_3_6"/>
<dbReference type="OrthoDB" id="9811804at2"/>
<dbReference type="Proteomes" id="UP000000642">
    <property type="component" value="Chromosome"/>
</dbReference>
<dbReference type="GO" id="GO:0005829">
    <property type="term" value="C:cytosol"/>
    <property type="evidence" value="ECO:0007669"/>
    <property type="project" value="TreeGrafter"/>
</dbReference>
<dbReference type="GO" id="GO:0005525">
    <property type="term" value="F:GTP binding"/>
    <property type="evidence" value="ECO:0007669"/>
    <property type="project" value="UniProtKB-KW"/>
</dbReference>
<dbReference type="GO" id="GO:0003924">
    <property type="term" value="F:GTPase activity"/>
    <property type="evidence" value="ECO:0007669"/>
    <property type="project" value="UniProtKB-UniRule"/>
</dbReference>
<dbReference type="GO" id="GO:0097216">
    <property type="term" value="F:guanosine tetraphosphate binding"/>
    <property type="evidence" value="ECO:0007669"/>
    <property type="project" value="UniProtKB-ARBA"/>
</dbReference>
<dbReference type="GO" id="GO:0003743">
    <property type="term" value="F:translation initiation factor activity"/>
    <property type="evidence" value="ECO:0007669"/>
    <property type="project" value="UniProtKB-UniRule"/>
</dbReference>
<dbReference type="CDD" id="cd01887">
    <property type="entry name" value="IF2_eIF5B"/>
    <property type="match status" value="1"/>
</dbReference>
<dbReference type="CDD" id="cd03702">
    <property type="entry name" value="IF2_mtIF2_II"/>
    <property type="match status" value="1"/>
</dbReference>
<dbReference type="CDD" id="cd03692">
    <property type="entry name" value="mtIF2_IVc"/>
    <property type="match status" value="1"/>
</dbReference>
<dbReference type="FunFam" id="2.40.30.10:FF:000007">
    <property type="entry name" value="Translation initiation factor IF-2"/>
    <property type="match status" value="1"/>
</dbReference>
<dbReference type="FunFam" id="2.40.30.10:FF:000008">
    <property type="entry name" value="Translation initiation factor IF-2"/>
    <property type="match status" value="1"/>
</dbReference>
<dbReference type="FunFam" id="3.30.56.50:FF:000001">
    <property type="entry name" value="Translation initiation factor IF-2"/>
    <property type="match status" value="1"/>
</dbReference>
<dbReference type="FunFam" id="3.40.50.10050:FF:000001">
    <property type="entry name" value="Translation initiation factor IF-2"/>
    <property type="match status" value="1"/>
</dbReference>
<dbReference type="FunFam" id="3.40.50.300:FF:000019">
    <property type="entry name" value="Translation initiation factor IF-2"/>
    <property type="match status" value="1"/>
</dbReference>
<dbReference type="Gene3D" id="3.40.50.300">
    <property type="entry name" value="P-loop containing nucleotide triphosphate hydrolases"/>
    <property type="match status" value="1"/>
</dbReference>
<dbReference type="Gene3D" id="3.30.56.50">
    <property type="entry name" value="Putative DNA-binding domain, N-terminal subdomain of bacterial translation initiation factor IF2"/>
    <property type="match status" value="1"/>
</dbReference>
<dbReference type="Gene3D" id="2.40.30.10">
    <property type="entry name" value="Translation factors"/>
    <property type="match status" value="2"/>
</dbReference>
<dbReference type="Gene3D" id="3.40.50.10050">
    <property type="entry name" value="Translation initiation factor IF- 2, domain 3"/>
    <property type="match status" value="1"/>
</dbReference>
<dbReference type="HAMAP" id="MF_00100_B">
    <property type="entry name" value="IF_2_B"/>
    <property type="match status" value="1"/>
</dbReference>
<dbReference type="InterPro" id="IPR009061">
    <property type="entry name" value="DNA-bd_dom_put_sf"/>
</dbReference>
<dbReference type="InterPro" id="IPR053905">
    <property type="entry name" value="EF-G-like_DII"/>
</dbReference>
<dbReference type="InterPro" id="IPR004161">
    <property type="entry name" value="EFTu-like_2"/>
</dbReference>
<dbReference type="InterPro" id="IPR013575">
    <property type="entry name" value="IF2_assoc_dom_bac"/>
</dbReference>
<dbReference type="InterPro" id="IPR044145">
    <property type="entry name" value="IF2_II"/>
</dbReference>
<dbReference type="InterPro" id="IPR006847">
    <property type="entry name" value="IF2_N"/>
</dbReference>
<dbReference type="InterPro" id="IPR027417">
    <property type="entry name" value="P-loop_NTPase"/>
</dbReference>
<dbReference type="InterPro" id="IPR005225">
    <property type="entry name" value="Small_GTP-bd"/>
</dbReference>
<dbReference type="InterPro" id="IPR000795">
    <property type="entry name" value="T_Tr_GTP-bd_dom"/>
</dbReference>
<dbReference type="InterPro" id="IPR000178">
    <property type="entry name" value="TF_IF2_bacterial-like"/>
</dbReference>
<dbReference type="InterPro" id="IPR015760">
    <property type="entry name" value="TIF_IF2"/>
</dbReference>
<dbReference type="InterPro" id="IPR023115">
    <property type="entry name" value="TIF_IF2_dom3"/>
</dbReference>
<dbReference type="InterPro" id="IPR036925">
    <property type="entry name" value="TIF_IF2_dom3_sf"/>
</dbReference>
<dbReference type="InterPro" id="IPR009000">
    <property type="entry name" value="Transl_B-barrel_sf"/>
</dbReference>
<dbReference type="NCBIfam" id="TIGR00487">
    <property type="entry name" value="IF-2"/>
    <property type="match status" value="1"/>
</dbReference>
<dbReference type="NCBIfam" id="TIGR00231">
    <property type="entry name" value="small_GTP"/>
    <property type="match status" value="1"/>
</dbReference>
<dbReference type="PANTHER" id="PTHR43381:SF5">
    <property type="entry name" value="TR-TYPE G DOMAIN-CONTAINING PROTEIN"/>
    <property type="match status" value="1"/>
</dbReference>
<dbReference type="PANTHER" id="PTHR43381">
    <property type="entry name" value="TRANSLATION INITIATION FACTOR IF-2-RELATED"/>
    <property type="match status" value="1"/>
</dbReference>
<dbReference type="Pfam" id="PF22042">
    <property type="entry name" value="EF-G_D2"/>
    <property type="match status" value="1"/>
</dbReference>
<dbReference type="Pfam" id="PF00009">
    <property type="entry name" value="GTP_EFTU"/>
    <property type="match status" value="1"/>
</dbReference>
<dbReference type="Pfam" id="PF03144">
    <property type="entry name" value="GTP_EFTU_D2"/>
    <property type="match status" value="1"/>
</dbReference>
<dbReference type="Pfam" id="PF11987">
    <property type="entry name" value="IF-2"/>
    <property type="match status" value="1"/>
</dbReference>
<dbReference type="Pfam" id="PF08364">
    <property type="entry name" value="IF2_assoc"/>
    <property type="match status" value="1"/>
</dbReference>
<dbReference type="Pfam" id="PF04760">
    <property type="entry name" value="IF2_N"/>
    <property type="match status" value="2"/>
</dbReference>
<dbReference type="SMART" id="SM00173">
    <property type="entry name" value="RAS"/>
    <property type="match status" value="1"/>
</dbReference>
<dbReference type="SUPFAM" id="SSF52156">
    <property type="entry name" value="Initiation factor IF2/eIF5b, domain 3"/>
    <property type="match status" value="1"/>
</dbReference>
<dbReference type="SUPFAM" id="SSF52540">
    <property type="entry name" value="P-loop containing nucleoside triphosphate hydrolases"/>
    <property type="match status" value="1"/>
</dbReference>
<dbReference type="SUPFAM" id="SSF46955">
    <property type="entry name" value="Putative DNA-binding domain"/>
    <property type="match status" value="1"/>
</dbReference>
<dbReference type="SUPFAM" id="SSF50447">
    <property type="entry name" value="Translation proteins"/>
    <property type="match status" value="2"/>
</dbReference>
<dbReference type="PROSITE" id="PS51722">
    <property type="entry name" value="G_TR_2"/>
    <property type="match status" value="1"/>
</dbReference>
<dbReference type="PROSITE" id="PS01176">
    <property type="entry name" value="IF2"/>
    <property type="match status" value="1"/>
</dbReference>
<proteinExistence type="inferred from homology"/>
<protein>
    <recommendedName>
        <fullName evidence="2">Translation initiation factor IF-2</fullName>
    </recommendedName>
</protein>
<accession>A1JIW9</accession>
<reference key="1">
    <citation type="journal article" date="2006" name="PLoS Genet.">
        <title>The complete genome sequence and comparative genome analysis of the high pathogenicity Yersinia enterocolitica strain 8081.</title>
        <authorList>
            <person name="Thomson N.R."/>
            <person name="Howard S."/>
            <person name="Wren B.W."/>
            <person name="Holden M.T.G."/>
            <person name="Crossman L."/>
            <person name="Challis G.L."/>
            <person name="Churcher C."/>
            <person name="Mungall K."/>
            <person name="Brooks K."/>
            <person name="Chillingworth T."/>
            <person name="Feltwell T."/>
            <person name="Abdellah Z."/>
            <person name="Hauser H."/>
            <person name="Jagels K."/>
            <person name="Maddison M."/>
            <person name="Moule S."/>
            <person name="Sanders M."/>
            <person name="Whitehead S."/>
            <person name="Quail M.A."/>
            <person name="Dougan G."/>
            <person name="Parkhill J."/>
            <person name="Prentice M.B."/>
        </authorList>
    </citation>
    <scope>NUCLEOTIDE SEQUENCE [LARGE SCALE GENOMIC DNA]</scope>
    <source>
        <strain>NCTC 13174 / 8081</strain>
    </source>
</reference>
<gene>
    <name evidence="2" type="primary">infB</name>
    <name type="ordered locus">YE0434</name>
</gene>
<organism>
    <name type="scientific">Yersinia enterocolitica serotype O:8 / biotype 1B (strain NCTC 13174 / 8081)</name>
    <dbReference type="NCBI Taxonomy" id="393305"/>
    <lineage>
        <taxon>Bacteria</taxon>
        <taxon>Pseudomonadati</taxon>
        <taxon>Pseudomonadota</taxon>
        <taxon>Gammaproteobacteria</taxon>
        <taxon>Enterobacterales</taxon>
        <taxon>Yersiniaceae</taxon>
        <taxon>Yersinia</taxon>
    </lineage>
</organism>
<sequence length="892" mass="97336">MTDVTVKSLADEIQTPVDRLVQQFADAGIKKSEVDSVTQQEKETLLAHLNREHGSAPNKLTLQRKTRSTLNIPSTGGKSKSVQIEVRKKRTYVNTPEAEQAKAEEQAQREAEEQAQREAEAAAQKIAEEKAKRAAEEQAKREAAEKAKRQAAEKEKVTNQQTDEKTKPAQTDKARREAEAAELKRSVEEETRRKVEEDAKRVAEEARKMAAENEGKWPEPVAEQTESADYHVTTSQHARAAEDENDAKVEGDRRSRTRGGKATKQKKGNKLSESKADREEARAVGRKGKRKPSTLQQSFNKPVVAVNRDVVIGETVTVAELANKMAVKGSQVIKAMMKLGAMATINQVIDQETAQLVAEEMGHKVILRRENELEEALMSDRDTGAEAAAEHRAPVVTIMGHVDHGKTSLLDYIRSTKVASGEAGGITQHIGAYHVETENGMITFLDTPGHAAFTSMRARGAQATDIVVLVVAADDGVMPQTIEAIQHAKAANVPVVVAVNKIDKPAADPNRVKTELIQHGIISEDFGGDVPFIEVSAKVGTGIDDLLQAILLQAEVMELKAVRTGMASGVVIESFLDKGRGPVATVLVQQGTLNKGDIVLCGFEYGRVRAMRDELGRDITSAGPSIPVEILGLSSVPAAGDEVTVVRDEKKAREVALYRQGKFREVKLARQQKSKLENMFANMTEGEVSELNIVIKSDVQGSCEAICDSLEKLSTDEVKVRIVGSGVGGITETDATLAAASGAIILGFNVRADASARRVVETEGLDLRYYSVIYSLIDEVKQAMSGMLAPEYKQQIIGLAEVRDVFKSPKFGAIAGCMVTEGVIKRNNPIRVLRDNVVIYEGELESLRRFKDDVNEVRNGMECGIGVKNYNDVRTGDVIEVFEIIEIKRTIA</sequence>
<name>IF2_YERE8</name>
<comment type="function">
    <text evidence="2">One of the essential components for the initiation of protein synthesis. Protects formylmethionyl-tRNA from spontaneous hydrolysis and promotes its binding to the 30S ribosomal subunits. Also involved in the hydrolysis of GTP during the formation of the 70S ribosomal complex.</text>
</comment>
<comment type="subcellular location">
    <subcellularLocation>
        <location evidence="2">Cytoplasm</location>
    </subcellularLocation>
</comment>
<comment type="similarity">
    <text evidence="2">Belongs to the TRAFAC class translation factor GTPase superfamily. Classic translation factor GTPase family. IF-2 subfamily.</text>
</comment>
<evidence type="ECO:0000250" key="1"/>
<evidence type="ECO:0000255" key="2">
    <source>
        <dbReference type="HAMAP-Rule" id="MF_00100"/>
    </source>
</evidence>
<evidence type="ECO:0000256" key="3">
    <source>
        <dbReference type="SAM" id="MobiDB-lite"/>
    </source>
</evidence>
<feature type="chain" id="PRO_1000008372" description="Translation initiation factor IF-2">
    <location>
        <begin position="1"/>
        <end position="892"/>
    </location>
</feature>
<feature type="domain" description="tr-type G">
    <location>
        <begin position="391"/>
        <end position="560"/>
    </location>
</feature>
<feature type="region of interest" description="Disordered" evidence="3">
    <location>
        <begin position="51"/>
        <end position="296"/>
    </location>
</feature>
<feature type="region of interest" description="G1" evidence="1">
    <location>
        <begin position="400"/>
        <end position="407"/>
    </location>
</feature>
<feature type="region of interest" description="G2" evidence="1">
    <location>
        <begin position="425"/>
        <end position="429"/>
    </location>
</feature>
<feature type="region of interest" description="G3" evidence="1">
    <location>
        <begin position="446"/>
        <end position="449"/>
    </location>
</feature>
<feature type="region of interest" description="G4" evidence="1">
    <location>
        <begin position="500"/>
        <end position="503"/>
    </location>
</feature>
<feature type="region of interest" description="G5" evidence="1">
    <location>
        <begin position="536"/>
        <end position="538"/>
    </location>
</feature>
<feature type="compositionally biased region" description="Polar residues" evidence="3">
    <location>
        <begin position="68"/>
        <end position="82"/>
    </location>
</feature>
<feature type="compositionally biased region" description="Basic and acidic residues" evidence="3">
    <location>
        <begin position="99"/>
        <end position="217"/>
    </location>
</feature>
<feature type="compositionally biased region" description="Polar residues" evidence="3">
    <location>
        <begin position="224"/>
        <end position="237"/>
    </location>
</feature>
<feature type="compositionally biased region" description="Basic and acidic residues" evidence="3">
    <location>
        <begin position="239"/>
        <end position="254"/>
    </location>
</feature>
<feature type="compositionally biased region" description="Basic residues" evidence="3">
    <location>
        <begin position="255"/>
        <end position="269"/>
    </location>
</feature>
<feature type="compositionally biased region" description="Basic and acidic residues" evidence="3">
    <location>
        <begin position="270"/>
        <end position="283"/>
    </location>
</feature>
<feature type="binding site" evidence="2">
    <location>
        <begin position="400"/>
        <end position="407"/>
    </location>
    <ligand>
        <name>GTP</name>
        <dbReference type="ChEBI" id="CHEBI:37565"/>
    </ligand>
</feature>
<feature type="binding site" evidence="2">
    <location>
        <begin position="446"/>
        <end position="450"/>
    </location>
    <ligand>
        <name>GTP</name>
        <dbReference type="ChEBI" id="CHEBI:37565"/>
    </ligand>
</feature>
<feature type="binding site" evidence="2">
    <location>
        <begin position="500"/>
        <end position="503"/>
    </location>
    <ligand>
        <name>GTP</name>
        <dbReference type="ChEBI" id="CHEBI:37565"/>
    </ligand>
</feature>